<comment type="function">
    <text evidence="1">Allows the formation of correctly charged Asn-tRNA(Asn) or Gln-tRNA(Gln) through the transamidation of misacylated Asp-tRNA(Asn) or Glu-tRNA(Gln) in organisms which lack either or both of asparaginyl-tRNA or glutaminyl-tRNA synthetases. The reaction takes place in the presence of glutamine and ATP through an activated phospho-Asp-tRNA(Asn) or phospho-Glu-tRNA(Gln).</text>
</comment>
<comment type="catalytic activity">
    <reaction evidence="1">
        <text>L-glutamyl-tRNA(Gln) + L-glutamine + ATP + H2O = L-glutaminyl-tRNA(Gln) + L-glutamate + ADP + phosphate + H(+)</text>
        <dbReference type="Rhea" id="RHEA:17521"/>
        <dbReference type="Rhea" id="RHEA-COMP:9681"/>
        <dbReference type="Rhea" id="RHEA-COMP:9684"/>
        <dbReference type="ChEBI" id="CHEBI:15377"/>
        <dbReference type="ChEBI" id="CHEBI:15378"/>
        <dbReference type="ChEBI" id="CHEBI:29985"/>
        <dbReference type="ChEBI" id="CHEBI:30616"/>
        <dbReference type="ChEBI" id="CHEBI:43474"/>
        <dbReference type="ChEBI" id="CHEBI:58359"/>
        <dbReference type="ChEBI" id="CHEBI:78520"/>
        <dbReference type="ChEBI" id="CHEBI:78521"/>
        <dbReference type="ChEBI" id="CHEBI:456216"/>
    </reaction>
</comment>
<comment type="catalytic activity">
    <reaction evidence="1">
        <text>L-aspartyl-tRNA(Asn) + L-glutamine + ATP + H2O = L-asparaginyl-tRNA(Asn) + L-glutamate + ADP + phosphate + 2 H(+)</text>
        <dbReference type="Rhea" id="RHEA:14513"/>
        <dbReference type="Rhea" id="RHEA-COMP:9674"/>
        <dbReference type="Rhea" id="RHEA-COMP:9677"/>
        <dbReference type="ChEBI" id="CHEBI:15377"/>
        <dbReference type="ChEBI" id="CHEBI:15378"/>
        <dbReference type="ChEBI" id="CHEBI:29985"/>
        <dbReference type="ChEBI" id="CHEBI:30616"/>
        <dbReference type="ChEBI" id="CHEBI:43474"/>
        <dbReference type="ChEBI" id="CHEBI:58359"/>
        <dbReference type="ChEBI" id="CHEBI:78515"/>
        <dbReference type="ChEBI" id="CHEBI:78516"/>
        <dbReference type="ChEBI" id="CHEBI:456216"/>
    </reaction>
</comment>
<comment type="subunit">
    <text evidence="1">Heterotrimer of A, B and C subunits.</text>
</comment>
<comment type="similarity">
    <text evidence="1">Belongs to the GatB/GatE family. GatB subfamily.</text>
</comment>
<organism>
    <name type="scientific">Oleidesulfovibrio alaskensis (strain ATCC BAA-1058 / DSM 17464 / G20)</name>
    <name type="common">Desulfovibrio alaskensis</name>
    <dbReference type="NCBI Taxonomy" id="207559"/>
    <lineage>
        <taxon>Bacteria</taxon>
        <taxon>Pseudomonadati</taxon>
        <taxon>Thermodesulfobacteriota</taxon>
        <taxon>Desulfovibrionia</taxon>
        <taxon>Desulfovibrionales</taxon>
        <taxon>Desulfovibrionaceae</taxon>
        <taxon>Oleidesulfovibrio</taxon>
    </lineage>
</organism>
<name>GATB_OLEA2</name>
<evidence type="ECO:0000255" key="1">
    <source>
        <dbReference type="HAMAP-Rule" id="MF_00121"/>
    </source>
</evidence>
<sequence>MAEYEVVIGLEVHAQLRTSSKLFCACSTEFGSEPNTNVCEICSGMPGVLPVVNRKAVEYAVMMGMAVDCTINNDSVFARKNYFYPDLPYGYQISQFERPLCEHGHLDIPVNGGTKRIGITRIHMENDAGKNIHSAADNASYVDLNRAGTPLIEIVSEPDMRSAEEAVAYLKELRSILLYLGICDGNMEEGSFRCDANVSLRPAGQKEFGTRTELKNVNSFRNVQRAIEVEIARQQDLLEDGEKVVQETRLYDAARNVTASMRGKEEAHDYRYFPDPDLIPLHLEDGWLQEWRKALPELPALRRTRFMEQYGLSVQDAELLTAERELADFYEAAVRHGGVPKKVANLMMGEFMRELNERRISVNEAAMTPEAVAELVRLQEEGVVSSKIVHDIFSDLFTSGSMPEAYVKAKGLVQISDSGAIETAVDEVLAENPAEVEAYRGGKTKLMSFFMGQVMRKTRGKANPAVVTGLLTEKLG</sequence>
<reference key="1">
    <citation type="journal article" date="2011" name="J. Bacteriol.">
        <title>Complete genome sequence and updated annotation of Desulfovibrio alaskensis G20.</title>
        <authorList>
            <person name="Hauser L.J."/>
            <person name="Land M.L."/>
            <person name="Brown S.D."/>
            <person name="Larimer F."/>
            <person name="Keller K.L."/>
            <person name="Rapp-Giles B.J."/>
            <person name="Price M.N."/>
            <person name="Lin M."/>
            <person name="Bruce D.C."/>
            <person name="Detter J.C."/>
            <person name="Tapia R."/>
            <person name="Han C.S."/>
            <person name="Goodwin L.A."/>
            <person name="Cheng J.F."/>
            <person name="Pitluck S."/>
            <person name="Copeland A."/>
            <person name="Lucas S."/>
            <person name="Nolan M."/>
            <person name="Lapidus A.L."/>
            <person name="Palumbo A.V."/>
            <person name="Wall J.D."/>
        </authorList>
    </citation>
    <scope>NUCLEOTIDE SEQUENCE [LARGE SCALE GENOMIC DNA]</scope>
    <source>
        <strain>ATCC BAA-1058 / DSM 17464 / G20</strain>
    </source>
</reference>
<protein>
    <recommendedName>
        <fullName evidence="1">Aspartyl/glutamyl-tRNA(Asn/Gln) amidotransferase subunit B</fullName>
        <shortName evidence="1">Asp/Glu-ADT subunit B</shortName>
        <ecNumber evidence="1">6.3.5.-</ecNumber>
    </recommendedName>
</protein>
<gene>
    <name evidence="1" type="primary">gatB</name>
    <name type="ordered locus">Dde_2615</name>
</gene>
<keyword id="KW-0067">ATP-binding</keyword>
<keyword id="KW-0436">Ligase</keyword>
<keyword id="KW-0547">Nucleotide-binding</keyword>
<keyword id="KW-0648">Protein biosynthesis</keyword>
<keyword id="KW-1185">Reference proteome</keyword>
<accession>Q30Y35</accession>
<feature type="chain" id="PRO_0000241217" description="Aspartyl/glutamyl-tRNA(Asn/Gln) amidotransferase subunit B">
    <location>
        <begin position="1"/>
        <end position="476"/>
    </location>
</feature>
<dbReference type="EC" id="6.3.5.-" evidence="1"/>
<dbReference type="EMBL" id="CP000112">
    <property type="protein sequence ID" value="ABB39411.1"/>
    <property type="molecule type" value="Genomic_DNA"/>
</dbReference>
<dbReference type="RefSeq" id="WP_011368448.1">
    <property type="nucleotide sequence ID" value="NC_007519.1"/>
</dbReference>
<dbReference type="SMR" id="Q30Y35"/>
<dbReference type="STRING" id="207559.Dde_2615"/>
<dbReference type="KEGG" id="dde:Dde_2615"/>
<dbReference type="eggNOG" id="COG0064">
    <property type="taxonomic scope" value="Bacteria"/>
</dbReference>
<dbReference type="HOGENOM" id="CLU_019240_0_0_7"/>
<dbReference type="Proteomes" id="UP000002710">
    <property type="component" value="Chromosome"/>
</dbReference>
<dbReference type="GO" id="GO:0050566">
    <property type="term" value="F:asparaginyl-tRNA synthase (glutamine-hydrolyzing) activity"/>
    <property type="evidence" value="ECO:0007669"/>
    <property type="project" value="RHEA"/>
</dbReference>
<dbReference type="GO" id="GO:0005524">
    <property type="term" value="F:ATP binding"/>
    <property type="evidence" value="ECO:0007669"/>
    <property type="project" value="UniProtKB-KW"/>
</dbReference>
<dbReference type="GO" id="GO:0050567">
    <property type="term" value="F:glutaminyl-tRNA synthase (glutamine-hydrolyzing) activity"/>
    <property type="evidence" value="ECO:0007669"/>
    <property type="project" value="UniProtKB-UniRule"/>
</dbReference>
<dbReference type="GO" id="GO:0070681">
    <property type="term" value="P:glutaminyl-tRNAGln biosynthesis via transamidation"/>
    <property type="evidence" value="ECO:0007669"/>
    <property type="project" value="TreeGrafter"/>
</dbReference>
<dbReference type="GO" id="GO:0006412">
    <property type="term" value="P:translation"/>
    <property type="evidence" value="ECO:0007669"/>
    <property type="project" value="UniProtKB-UniRule"/>
</dbReference>
<dbReference type="FunFam" id="1.10.10.410:FF:000001">
    <property type="entry name" value="Aspartyl/glutamyl-tRNA(Asn/Gln) amidotransferase subunit B"/>
    <property type="match status" value="1"/>
</dbReference>
<dbReference type="FunFam" id="1.10.150.380:FF:000001">
    <property type="entry name" value="Aspartyl/glutamyl-tRNA(Asn/Gln) amidotransferase subunit B"/>
    <property type="match status" value="1"/>
</dbReference>
<dbReference type="Gene3D" id="1.10.10.410">
    <property type="match status" value="1"/>
</dbReference>
<dbReference type="Gene3D" id="1.10.150.380">
    <property type="entry name" value="GatB domain, N-terminal subdomain"/>
    <property type="match status" value="1"/>
</dbReference>
<dbReference type="HAMAP" id="MF_00121">
    <property type="entry name" value="GatB"/>
    <property type="match status" value="1"/>
</dbReference>
<dbReference type="InterPro" id="IPR017959">
    <property type="entry name" value="Asn/Gln-tRNA_amidoTrfase_suB/E"/>
</dbReference>
<dbReference type="InterPro" id="IPR006075">
    <property type="entry name" value="Asn/Gln-tRNA_Trfase_suB/E_cat"/>
</dbReference>
<dbReference type="InterPro" id="IPR018027">
    <property type="entry name" value="Asn/Gln_amidotransferase"/>
</dbReference>
<dbReference type="InterPro" id="IPR003789">
    <property type="entry name" value="Asn/Gln_tRNA_amidoTrase-B-like"/>
</dbReference>
<dbReference type="InterPro" id="IPR004413">
    <property type="entry name" value="GatB"/>
</dbReference>
<dbReference type="InterPro" id="IPR042114">
    <property type="entry name" value="GatB_C_1"/>
</dbReference>
<dbReference type="InterPro" id="IPR023168">
    <property type="entry name" value="GatB_Yqey_C_2"/>
</dbReference>
<dbReference type="InterPro" id="IPR017958">
    <property type="entry name" value="Gln-tRNA_amidoTrfase_suB_CS"/>
</dbReference>
<dbReference type="InterPro" id="IPR014746">
    <property type="entry name" value="Gln_synth/guanido_kin_cat_dom"/>
</dbReference>
<dbReference type="NCBIfam" id="TIGR00133">
    <property type="entry name" value="gatB"/>
    <property type="match status" value="1"/>
</dbReference>
<dbReference type="NCBIfam" id="NF004012">
    <property type="entry name" value="PRK05477.1-2"/>
    <property type="match status" value="1"/>
</dbReference>
<dbReference type="NCBIfam" id="NF004014">
    <property type="entry name" value="PRK05477.1-4"/>
    <property type="match status" value="1"/>
</dbReference>
<dbReference type="NCBIfam" id="NF004015">
    <property type="entry name" value="PRK05477.1-5"/>
    <property type="match status" value="1"/>
</dbReference>
<dbReference type="PANTHER" id="PTHR11659">
    <property type="entry name" value="GLUTAMYL-TRNA GLN AMIDOTRANSFERASE SUBUNIT B MITOCHONDRIAL AND PROKARYOTIC PET112-RELATED"/>
    <property type="match status" value="1"/>
</dbReference>
<dbReference type="PANTHER" id="PTHR11659:SF0">
    <property type="entry name" value="GLUTAMYL-TRNA(GLN) AMIDOTRANSFERASE SUBUNIT B, MITOCHONDRIAL"/>
    <property type="match status" value="1"/>
</dbReference>
<dbReference type="Pfam" id="PF02934">
    <property type="entry name" value="GatB_N"/>
    <property type="match status" value="1"/>
</dbReference>
<dbReference type="Pfam" id="PF02637">
    <property type="entry name" value="GatB_Yqey"/>
    <property type="match status" value="1"/>
</dbReference>
<dbReference type="SMART" id="SM00845">
    <property type="entry name" value="GatB_Yqey"/>
    <property type="match status" value="1"/>
</dbReference>
<dbReference type="SUPFAM" id="SSF89095">
    <property type="entry name" value="GatB/YqeY motif"/>
    <property type="match status" value="1"/>
</dbReference>
<dbReference type="SUPFAM" id="SSF55931">
    <property type="entry name" value="Glutamine synthetase/guanido kinase"/>
    <property type="match status" value="1"/>
</dbReference>
<dbReference type="PROSITE" id="PS01234">
    <property type="entry name" value="GATB"/>
    <property type="match status" value="1"/>
</dbReference>
<proteinExistence type="inferred from homology"/>